<evidence type="ECO:0000255" key="1">
    <source>
        <dbReference type="HAMAP-Rule" id="MF_03119"/>
    </source>
</evidence>
<sequence length="384" mass="41472">MSLQAIKYFDNQLQIIDQLQLPFVTEYIPIRSAQDGWYAIKEMRVRGAPAIAIVAILSLAVELNEIHTAGKLSSSSEEVGLFIIEKLHYLVTSRPTAVNLADAARKFENMVTEHTRAQDSTGQSLVAAYLKEAELMLVHDLSDNQNIGEYGAKWILERAATQGQNKVNVLTHCNTGSLATAGYGTALGVIRSLHAKNALNRVYCTETRPYNQGARLTAYELVHEKMPATLITDSMAASLLAKSHSKVSAIVVGADRVAANGDTANKIGTYALAVLAKYHGVKFLVAAPRTTIDRGTLTGTEIVIEERAPSEVTTIKGPLQGRVGDTLQMETIQLAATGIDVWNPAFDVTPAALIDAVITEKGVVEKGSDGFFHFDALFEESASS</sequence>
<dbReference type="EC" id="5.3.1.23" evidence="1"/>
<dbReference type="EMBL" id="EQ962654">
    <property type="protein sequence ID" value="EED20352.1"/>
    <property type="molecule type" value="Genomic_DNA"/>
</dbReference>
<dbReference type="RefSeq" id="XP_002480786.1">
    <property type="nucleotide sequence ID" value="XM_002480741.1"/>
</dbReference>
<dbReference type="SMR" id="B8M7D2"/>
<dbReference type="FunCoup" id="B8M7D2">
    <property type="interactions" value="712"/>
</dbReference>
<dbReference type="STRING" id="441959.B8M7D2"/>
<dbReference type="GeneID" id="8107528"/>
<dbReference type="VEuPathDB" id="FungiDB:TSTA_035790"/>
<dbReference type="eggNOG" id="KOG1468">
    <property type="taxonomic scope" value="Eukaryota"/>
</dbReference>
<dbReference type="HOGENOM" id="CLU_016218_1_3_1"/>
<dbReference type="InParanoid" id="B8M7D2"/>
<dbReference type="OMA" id="CETRPLN"/>
<dbReference type="OrthoDB" id="2461at2759"/>
<dbReference type="PhylomeDB" id="B8M7D2"/>
<dbReference type="UniPathway" id="UPA00904">
    <property type="reaction ID" value="UER00874"/>
</dbReference>
<dbReference type="Proteomes" id="UP000001745">
    <property type="component" value="Unassembled WGS sequence"/>
</dbReference>
<dbReference type="GO" id="GO:0005737">
    <property type="term" value="C:cytoplasm"/>
    <property type="evidence" value="ECO:0007669"/>
    <property type="project" value="UniProtKB-SubCell"/>
</dbReference>
<dbReference type="GO" id="GO:0005634">
    <property type="term" value="C:nucleus"/>
    <property type="evidence" value="ECO:0007669"/>
    <property type="project" value="UniProtKB-SubCell"/>
</dbReference>
<dbReference type="GO" id="GO:0046523">
    <property type="term" value="F:S-methyl-5-thioribose-1-phosphate isomerase activity"/>
    <property type="evidence" value="ECO:0007669"/>
    <property type="project" value="UniProtKB-UniRule"/>
</dbReference>
<dbReference type="GO" id="GO:0019509">
    <property type="term" value="P:L-methionine salvage from methylthioadenosine"/>
    <property type="evidence" value="ECO:0007669"/>
    <property type="project" value="UniProtKB-UniRule"/>
</dbReference>
<dbReference type="FunFam" id="1.20.120.420:FF:000003">
    <property type="entry name" value="Methylthioribose-1-phosphate isomerase"/>
    <property type="match status" value="1"/>
</dbReference>
<dbReference type="FunFam" id="3.40.50.10470:FF:000003">
    <property type="entry name" value="Methylthioribose-1-phosphate isomerase"/>
    <property type="match status" value="1"/>
</dbReference>
<dbReference type="Gene3D" id="1.20.120.420">
    <property type="entry name" value="translation initiation factor eif-2b, domain 1"/>
    <property type="match status" value="1"/>
</dbReference>
<dbReference type="Gene3D" id="3.40.50.10470">
    <property type="entry name" value="Translation initiation factor eif-2b, domain 2"/>
    <property type="match status" value="1"/>
</dbReference>
<dbReference type="HAMAP" id="MF_01678">
    <property type="entry name" value="Salvage_MtnA"/>
    <property type="match status" value="1"/>
</dbReference>
<dbReference type="InterPro" id="IPR000649">
    <property type="entry name" value="IF-2B-related"/>
</dbReference>
<dbReference type="InterPro" id="IPR005251">
    <property type="entry name" value="IF-M1Pi"/>
</dbReference>
<dbReference type="InterPro" id="IPR042529">
    <property type="entry name" value="IF_2B-like_C"/>
</dbReference>
<dbReference type="InterPro" id="IPR011559">
    <property type="entry name" value="Initiation_fac_2B_a/b/d"/>
</dbReference>
<dbReference type="InterPro" id="IPR027363">
    <property type="entry name" value="M1Pi_N"/>
</dbReference>
<dbReference type="InterPro" id="IPR037171">
    <property type="entry name" value="NagB/RpiA_transferase-like"/>
</dbReference>
<dbReference type="NCBIfam" id="TIGR00524">
    <property type="entry name" value="eIF-2B_rel"/>
    <property type="match status" value="1"/>
</dbReference>
<dbReference type="NCBIfam" id="NF004326">
    <property type="entry name" value="PRK05720.1"/>
    <property type="match status" value="1"/>
</dbReference>
<dbReference type="NCBIfam" id="TIGR00512">
    <property type="entry name" value="salvage_mtnA"/>
    <property type="match status" value="1"/>
</dbReference>
<dbReference type="PANTHER" id="PTHR43475">
    <property type="entry name" value="METHYLTHIORIBOSE-1-PHOSPHATE ISOMERASE"/>
    <property type="match status" value="1"/>
</dbReference>
<dbReference type="PANTHER" id="PTHR43475:SF1">
    <property type="entry name" value="METHYLTHIORIBOSE-1-PHOSPHATE ISOMERASE"/>
    <property type="match status" value="1"/>
</dbReference>
<dbReference type="Pfam" id="PF01008">
    <property type="entry name" value="IF-2B"/>
    <property type="match status" value="1"/>
</dbReference>
<dbReference type="SUPFAM" id="SSF100950">
    <property type="entry name" value="NagB/RpiA/CoA transferase-like"/>
    <property type="match status" value="1"/>
</dbReference>
<accession>B8M7D2</accession>
<feature type="chain" id="PRO_0000402055" description="Methylthioribose-1-phosphate isomerase">
    <location>
        <begin position="1"/>
        <end position="384"/>
    </location>
</feature>
<feature type="active site" description="Proton donor" evidence="1">
    <location>
        <position position="255"/>
    </location>
</feature>
<feature type="site" description="Transition state stabilizer" evidence="1">
    <location>
        <position position="173"/>
    </location>
</feature>
<keyword id="KW-0028">Amino-acid biosynthesis</keyword>
<keyword id="KW-0963">Cytoplasm</keyword>
<keyword id="KW-0413">Isomerase</keyword>
<keyword id="KW-0486">Methionine biosynthesis</keyword>
<keyword id="KW-0539">Nucleus</keyword>
<keyword id="KW-1185">Reference proteome</keyword>
<name>MTNA_TALSN</name>
<comment type="function">
    <text evidence="1">Catalyzes the interconversion of methylthioribose-1-phosphate (MTR-1-P) into methylthioribulose-1-phosphate (MTRu-1-P).</text>
</comment>
<comment type="catalytic activity">
    <reaction evidence="1">
        <text>5-(methylsulfanyl)-alpha-D-ribose 1-phosphate = 5-(methylsulfanyl)-D-ribulose 1-phosphate</text>
        <dbReference type="Rhea" id="RHEA:19989"/>
        <dbReference type="ChEBI" id="CHEBI:58533"/>
        <dbReference type="ChEBI" id="CHEBI:58548"/>
        <dbReference type="EC" id="5.3.1.23"/>
    </reaction>
</comment>
<comment type="pathway">
    <text evidence="1">Amino-acid biosynthesis; L-methionine biosynthesis via salvage pathway; L-methionine from S-methyl-5-thio-alpha-D-ribose 1-phosphate: step 1/6.</text>
</comment>
<comment type="subcellular location">
    <subcellularLocation>
        <location evidence="1">Cytoplasm</location>
    </subcellularLocation>
    <subcellularLocation>
        <location evidence="1">Nucleus</location>
    </subcellularLocation>
</comment>
<comment type="similarity">
    <text evidence="1">Belongs to the eIF-2B alpha/beta/delta subunits family. MtnA subfamily.</text>
</comment>
<gene>
    <name type="primary">mri1</name>
    <name type="ORF">TSTA_035790</name>
</gene>
<protein>
    <recommendedName>
        <fullName evidence="1">Methylthioribose-1-phosphate isomerase</fullName>
        <shortName evidence="1">M1Pi</shortName>
        <shortName evidence="1">MTR-1-P isomerase</shortName>
        <ecNumber evidence="1">5.3.1.23</ecNumber>
    </recommendedName>
    <alternativeName>
        <fullName evidence="1">S-methyl-5-thioribose-1-phosphate isomerase</fullName>
    </alternativeName>
    <alternativeName>
        <fullName evidence="1">Translation initiation factor eIF-2B subunit alpha/beta/delta-like protein</fullName>
    </alternativeName>
</protein>
<proteinExistence type="inferred from homology"/>
<reference key="1">
    <citation type="journal article" date="2015" name="Genome Announc.">
        <title>Genome sequence of the AIDS-associated pathogen Penicillium marneffei (ATCC18224) and its near taxonomic relative Talaromyces stipitatus (ATCC10500).</title>
        <authorList>
            <person name="Nierman W.C."/>
            <person name="Fedorova-Abrams N.D."/>
            <person name="Andrianopoulos A."/>
        </authorList>
    </citation>
    <scope>NUCLEOTIDE SEQUENCE [LARGE SCALE GENOMIC DNA]</scope>
    <source>
        <strain>ATCC 10500 / CBS 375.48 / QM 6759 / NRRL 1006</strain>
    </source>
</reference>
<organism>
    <name type="scientific">Talaromyces stipitatus (strain ATCC 10500 / CBS 375.48 / QM 6759 / NRRL 1006)</name>
    <name type="common">Penicillium stipitatum</name>
    <dbReference type="NCBI Taxonomy" id="441959"/>
    <lineage>
        <taxon>Eukaryota</taxon>
        <taxon>Fungi</taxon>
        <taxon>Dikarya</taxon>
        <taxon>Ascomycota</taxon>
        <taxon>Pezizomycotina</taxon>
        <taxon>Eurotiomycetes</taxon>
        <taxon>Eurotiomycetidae</taxon>
        <taxon>Eurotiales</taxon>
        <taxon>Trichocomaceae</taxon>
        <taxon>Talaromyces</taxon>
        <taxon>Talaromyces sect. Talaromyces</taxon>
    </lineage>
</organism>